<proteinExistence type="evidence at protein level"/>
<gene>
    <name evidence="6" type="primary">Y1-BFP</name>
</gene>
<comment type="function">
    <text evidence="2">Blue fluorescence protein (BFP) that can bind 6,7-dimethyl-8-ribityllumazine, riboflavin, and 6-methyl-7-oxo-8-ribityllumazine as a bound fluorophore. Has no riboflavin-synthase activity.</text>
</comment>
<comment type="subunit">
    <text evidence="3">Monomer.</text>
</comment>
<comment type="subcellular location">
    <subcellularLocation>
        <location evidence="5">Cytoplasm</location>
    </subcellularLocation>
</comment>
<keyword id="KW-0963">Cytoplasm</keyword>
<keyword id="KW-0903">Direct protein sequencing</keyword>
<keyword id="KW-0455">Luminescence</keyword>
<keyword id="KW-0677">Repeat</keyword>
<evidence type="ECO:0000255" key="1">
    <source>
        <dbReference type="PROSITE-ProRule" id="PRU00524"/>
    </source>
</evidence>
<evidence type="ECO:0000269" key="2">
    <source>
    </source>
</evidence>
<evidence type="ECO:0000269" key="3">
    <source ref="1"/>
</evidence>
<evidence type="ECO:0000303" key="4">
    <source>
    </source>
</evidence>
<evidence type="ECO:0000305" key="5">
    <source ref="1"/>
</evidence>
<evidence type="ECO:0000312" key="6">
    <source>
        <dbReference type="EMBL" id="BAG71497.1"/>
    </source>
</evidence>
<feature type="chain" id="PRO_0000068155" description="Blue fluorescence protein">
    <location>
        <begin position="1"/>
        <end position="200"/>
    </location>
</feature>
<feature type="repeat" description="Lumazine-binding 1" evidence="1">
    <location>
        <begin position="1"/>
        <end position="111"/>
    </location>
</feature>
<feature type="repeat" description="Lumazine-binding 2" evidence="1">
    <location>
        <begin position="112"/>
        <end position="200"/>
    </location>
</feature>
<protein>
    <recommendedName>
        <fullName evidence="4">Blue fluorescence protein</fullName>
        <shortName evidence="4">BFP</shortName>
    </recommendedName>
</protein>
<organism>
    <name type="scientific">Aliivibrio fischeri</name>
    <name type="common">Vibrio fischeri</name>
    <dbReference type="NCBI Taxonomy" id="668"/>
    <lineage>
        <taxon>Bacteria</taxon>
        <taxon>Pseudomonadati</taxon>
        <taxon>Pseudomonadota</taxon>
        <taxon>Gammaproteobacteria</taxon>
        <taxon>Vibrionales</taxon>
        <taxon>Vibrionaceae</taxon>
        <taxon>Aliivibrio</taxon>
    </lineage>
</organism>
<reference key="1">
    <citation type="journal article" date="2006" name="ITE Lett. Batteries New Technol. Med.">
        <title>Gene analysis of a blue fluorescent protein from yellow emitting Vibrio fischeri strain Y1 and the protein expression.</title>
        <authorList>
            <person name="Karatani H."/>
            <person name="Osaki T."/>
            <person name="Yasui M."/>
            <person name="Ohta S."/>
        </authorList>
    </citation>
    <scope>NUCLEOTIDE SEQUENCE [GENOMIC DNA]</scope>
    <source>
        <strain>ATCC 33715 / Y-1</strain>
    </source>
</reference>
<reference key="2">
    <citation type="journal article" date="1997" name="Eur. J. Biochem.">
        <title>Purification and characterization of flavoproteins and cytochromes from the yellow bioluminescence marine bacterium Vibrio fischeri strain Y1.</title>
        <authorList>
            <person name="Petushkov V.N."/>
            <person name="Lee J."/>
        </authorList>
    </citation>
    <scope>PROTEIN SEQUENCE OF 1-52</scope>
    <scope>FUNCTION</scope>
    <scope>SUBUNIT</scope>
    <source>
        <strain>ATCC 33715 / Y-1</strain>
    </source>
</reference>
<accession>P80893</accession>
<accession>B6F211</accession>
<sequence length="200" mass="22215">MFKGNVQGVGTVENIDKGAKFQSLHGVSLLPIDADLQSHDIIFPEDILEGVTSGELIAINGVRLTVVHTDKSIVRFDINDALELTTLGQLKVGDKVNIEKSFKFGDMTGGRSLSGIVTGVADIVEFIEKENNRQIWIEAPEHLTEFLVEKKYIGVDGVYLVIDAIENNRFCINLLLETDMRWYKKGSKVNIEIPDIAGNW</sequence>
<name>BFP_ALIFS</name>
<dbReference type="EMBL" id="AB459501">
    <property type="protein sequence ID" value="BAG71497.1"/>
    <property type="molecule type" value="Genomic_DNA"/>
</dbReference>
<dbReference type="SMR" id="P80893"/>
<dbReference type="GO" id="GO:0005737">
    <property type="term" value="C:cytoplasm"/>
    <property type="evidence" value="ECO:0007669"/>
    <property type="project" value="UniProtKB-SubCell"/>
</dbReference>
<dbReference type="GO" id="GO:0004746">
    <property type="term" value="F:riboflavin synthase activity"/>
    <property type="evidence" value="ECO:0007669"/>
    <property type="project" value="TreeGrafter"/>
</dbReference>
<dbReference type="GO" id="GO:0008218">
    <property type="term" value="P:bioluminescence"/>
    <property type="evidence" value="ECO:0007669"/>
    <property type="project" value="UniProtKB-KW"/>
</dbReference>
<dbReference type="GO" id="GO:0009231">
    <property type="term" value="P:riboflavin biosynthetic process"/>
    <property type="evidence" value="ECO:0007669"/>
    <property type="project" value="TreeGrafter"/>
</dbReference>
<dbReference type="CDD" id="cd16256">
    <property type="entry name" value="LumP"/>
    <property type="match status" value="1"/>
</dbReference>
<dbReference type="Gene3D" id="2.40.30.20">
    <property type="match status" value="2"/>
</dbReference>
<dbReference type="InterPro" id="IPR023366">
    <property type="entry name" value="ATP_synth_asu-like_sf"/>
</dbReference>
<dbReference type="InterPro" id="IPR001783">
    <property type="entry name" value="Lumazine-bd"/>
</dbReference>
<dbReference type="InterPro" id="IPR026017">
    <property type="entry name" value="Lumazine-bd_dom"/>
</dbReference>
<dbReference type="InterPro" id="IPR017938">
    <property type="entry name" value="Riboflavin_synthase-like_b-brl"/>
</dbReference>
<dbReference type="PANTHER" id="PTHR21098:SF0">
    <property type="entry name" value="RIBOFLAVIN SYNTHASE"/>
    <property type="match status" value="1"/>
</dbReference>
<dbReference type="PANTHER" id="PTHR21098">
    <property type="entry name" value="RIBOFLAVIN SYNTHASE ALPHA CHAIN"/>
    <property type="match status" value="1"/>
</dbReference>
<dbReference type="Pfam" id="PF00677">
    <property type="entry name" value="Lum_binding"/>
    <property type="match status" value="2"/>
</dbReference>
<dbReference type="PIRSF" id="PIRSF000498">
    <property type="entry name" value="Riboflavin_syn_A"/>
    <property type="match status" value="1"/>
</dbReference>
<dbReference type="SUPFAM" id="SSF63380">
    <property type="entry name" value="Riboflavin synthase domain-like"/>
    <property type="match status" value="2"/>
</dbReference>
<dbReference type="PROSITE" id="PS51177">
    <property type="entry name" value="LUMAZINE_BIND"/>
    <property type="match status" value="2"/>
</dbReference>